<gene>
    <name type="primary">cdhC1</name>
    <name type="ordered locus">MJ0152</name>
</gene>
<dbReference type="EC" id="2.3.1.169" evidence="3"/>
<dbReference type="EMBL" id="L77117">
    <property type="protein sequence ID" value="AAB98134.1"/>
    <property type="molecule type" value="Genomic_DNA"/>
</dbReference>
<dbReference type="PIR" id="A64319">
    <property type="entry name" value="A64319"/>
</dbReference>
<dbReference type="SMR" id="Q57616"/>
<dbReference type="FunCoup" id="Q57616">
    <property type="interactions" value="90"/>
</dbReference>
<dbReference type="STRING" id="243232.MJ_0152"/>
<dbReference type="PaxDb" id="243232-MJ_0152"/>
<dbReference type="EnsemblBacteria" id="AAB98134">
    <property type="protein sequence ID" value="AAB98134"/>
    <property type="gene ID" value="MJ_0152"/>
</dbReference>
<dbReference type="KEGG" id="mja:MJ_0152"/>
<dbReference type="eggNOG" id="arCOG02428">
    <property type="taxonomic scope" value="Archaea"/>
</dbReference>
<dbReference type="eggNOG" id="arCOG04360">
    <property type="taxonomic scope" value="Archaea"/>
</dbReference>
<dbReference type="HOGENOM" id="CLU_378422_0_0_2"/>
<dbReference type="InParanoid" id="Q57616"/>
<dbReference type="PhylomeDB" id="Q57616"/>
<dbReference type="Proteomes" id="UP000000805">
    <property type="component" value="Chromosome"/>
</dbReference>
<dbReference type="GO" id="GO:0016407">
    <property type="term" value="F:acetyltransferase activity"/>
    <property type="evidence" value="ECO:0007669"/>
    <property type="project" value="UniProtKB-UniRule"/>
</dbReference>
<dbReference type="GO" id="GO:0043885">
    <property type="term" value="F:anaerobic carbon-monoxide dehydrogenase activity"/>
    <property type="evidence" value="ECO:0007669"/>
    <property type="project" value="InterPro"/>
</dbReference>
<dbReference type="GO" id="GO:0043884">
    <property type="term" value="F:CO-methylating acetyl-CoA synthase activity"/>
    <property type="evidence" value="ECO:0007669"/>
    <property type="project" value="UniProtKB-EC"/>
</dbReference>
<dbReference type="GO" id="GO:0005506">
    <property type="term" value="F:iron ion binding"/>
    <property type="evidence" value="ECO:0007669"/>
    <property type="project" value="UniProtKB-UniRule"/>
</dbReference>
<dbReference type="GO" id="GO:0051536">
    <property type="term" value="F:iron-sulfur cluster binding"/>
    <property type="evidence" value="ECO:0007669"/>
    <property type="project" value="UniProtKB-KW"/>
</dbReference>
<dbReference type="GO" id="GO:0016151">
    <property type="term" value="F:nickel cation binding"/>
    <property type="evidence" value="ECO:0007669"/>
    <property type="project" value="UniProtKB-UniRule"/>
</dbReference>
<dbReference type="GO" id="GO:0006084">
    <property type="term" value="P:acetyl-CoA metabolic process"/>
    <property type="evidence" value="ECO:0007669"/>
    <property type="project" value="InterPro"/>
</dbReference>
<dbReference type="CDD" id="cd01917">
    <property type="entry name" value="ACS_2"/>
    <property type="match status" value="1"/>
</dbReference>
<dbReference type="Gene3D" id="3.40.50.2030">
    <property type="match status" value="1"/>
</dbReference>
<dbReference type="Gene3D" id="3.30.1650.10">
    <property type="entry name" value="Bifunctional carbon monoxide dehydrogenase/acetyl-coa synthase(codh/acs), Chain M, domain 3"/>
    <property type="match status" value="1"/>
</dbReference>
<dbReference type="Gene3D" id="3.40.1470.10">
    <property type="entry name" value="Bifunctional carbon monoxide dehydrogenase/acetyl-coa synthase(codh/acs), Chain M, domain 5"/>
    <property type="match status" value="1"/>
</dbReference>
<dbReference type="Gene3D" id="3.40.970.20">
    <property type="entry name" value="Carbon monoxide dehydrogenase alpha subunit. Chain D, domain 4"/>
    <property type="match status" value="1"/>
</dbReference>
<dbReference type="Gene3D" id="1.10.8.190">
    <property type="entry name" value="Carbon monoxide dehydrogenase alpha subunit. Chain M, domain 1"/>
    <property type="match status" value="1"/>
</dbReference>
<dbReference type="HAMAP" id="MF_01138">
    <property type="entry name" value="CdhC"/>
    <property type="match status" value="1"/>
</dbReference>
<dbReference type="InterPro" id="IPR045822">
    <property type="entry name" value="ACS_CODH_B_C"/>
</dbReference>
<dbReference type="InterPro" id="IPR004461">
    <property type="entry name" value="CO_DH/Ac-CoA_synth_bsu"/>
</dbReference>
<dbReference type="InterPro" id="IPR038571">
    <property type="entry name" value="CO_DH/Ac-CoA_synth_bsu_3_sf"/>
</dbReference>
<dbReference type="InterPro" id="IPR023432">
    <property type="entry name" value="CO_DH/Ac-CoA_synth_bsu_arc"/>
</dbReference>
<dbReference type="InterPro" id="IPR041350">
    <property type="entry name" value="CODH_A_N"/>
</dbReference>
<dbReference type="InterPro" id="IPR016099">
    <property type="entry name" value="Prismane-like_a/b-sand"/>
</dbReference>
<dbReference type="InterPro" id="IPR011254">
    <property type="entry name" value="Prismane-like_sf"/>
</dbReference>
<dbReference type="NCBIfam" id="TIGR00316">
    <property type="entry name" value="cdhC"/>
    <property type="match status" value="1"/>
</dbReference>
<dbReference type="NCBIfam" id="NF040764">
    <property type="entry name" value="CODH_ACS_al_bet"/>
    <property type="match status" value="1"/>
</dbReference>
<dbReference type="NCBIfam" id="NF003379">
    <property type="entry name" value="PRK04456.1"/>
    <property type="match status" value="1"/>
</dbReference>
<dbReference type="NCBIfam" id="NF007078">
    <property type="entry name" value="PRK09529.1"/>
    <property type="match status" value="1"/>
</dbReference>
<dbReference type="PANTHER" id="PTHR42281">
    <property type="match status" value="1"/>
</dbReference>
<dbReference type="PANTHER" id="PTHR42281:SF1">
    <property type="entry name" value="ACETYL-COA DECARBONYLASE_SYNTHASE COMPLEX SUBUNIT BETA 1"/>
    <property type="match status" value="1"/>
</dbReference>
<dbReference type="Pfam" id="PF19436">
    <property type="entry name" value="ACS_CODH_B_C"/>
    <property type="match status" value="1"/>
</dbReference>
<dbReference type="Pfam" id="PF03598">
    <property type="entry name" value="CdhC"/>
    <property type="match status" value="1"/>
</dbReference>
<dbReference type="Pfam" id="PF18537">
    <property type="entry name" value="CODH_A_N"/>
    <property type="match status" value="1"/>
</dbReference>
<dbReference type="SUPFAM" id="SSF56821">
    <property type="entry name" value="Prismane protein-like"/>
    <property type="match status" value="1"/>
</dbReference>
<keyword id="KW-0012">Acyltransferase</keyword>
<keyword id="KW-0408">Iron</keyword>
<keyword id="KW-0411">Iron-sulfur</keyword>
<keyword id="KW-0479">Metal-binding</keyword>
<keyword id="KW-0533">Nickel</keyword>
<keyword id="KW-1185">Reference proteome</keyword>
<keyword id="KW-0808">Transferase</keyword>
<evidence type="ECO:0000250" key="1"/>
<evidence type="ECO:0000255" key="2"/>
<evidence type="ECO:0000255" key="3">
    <source>
        <dbReference type="HAMAP-Rule" id="MF_01138"/>
    </source>
</evidence>
<evidence type="ECO:0000305" key="4"/>
<protein>
    <recommendedName>
        <fullName>Acetyl-CoA decarbonylase/synthase complex subunit beta 1</fullName>
        <shortName>ACDS complex subunit beta 1</shortName>
        <ecNumber evidence="3">2.3.1.169</ecNumber>
    </recommendedName>
    <alternativeName>
        <fullName>ACDS complex acyltransferase 1</fullName>
    </alternativeName>
</protein>
<comment type="function">
    <text evidence="3">Part of a complex that catalyzes the reversible cleavage of acetyl-CoA, allowing autotrophic growth from CO(2). The alpha-epsilon complex generates CO from CO(2), while the beta subunit (this protein) combines the CO with CoA and a methyl group to form acetyl-CoA. The methyl group, which is incorporated into acetyl-CoA, is transferred to the beta subunit by a corrinoid iron-sulfur protein (the gamma-delta complex).</text>
</comment>
<comment type="catalytic activity">
    <reaction evidence="3">
        <text>Co(I)-[corrinoid Fe-S protein] + acetyl-CoA + H(+) = methyl-Co(III)-[corrinoid Fe-S protein] + CO + CoA</text>
        <dbReference type="Rhea" id="RHEA:45212"/>
        <dbReference type="Rhea" id="RHEA-COMP:11110"/>
        <dbReference type="Rhea" id="RHEA-COMP:11111"/>
        <dbReference type="ChEBI" id="CHEBI:15378"/>
        <dbReference type="ChEBI" id="CHEBI:17245"/>
        <dbReference type="ChEBI" id="CHEBI:57287"/>
        <dbReference type="ChEBI" id="CHEBI:57288"/>
        <dbReference type="ChEBI" id="CHEBI:85033"/>
        <dbReference type="ChEBI" id="CHEBI:85035"/>
        <dbReference type="EC" id="2.3.1.169"/>
    </reaction>
</comment>
<comment type="cofactor">
    <cofactor evidence="1">
        <name>[Ni-Fe-S] cluster</name>
        <dbReference type="ChEBI" id="CHEBI:60400"/>
    </cofactor>
    <text evidence="1">Binds 1 [Ni-Fe-S] cluster.</text>
</comment>
<comment type="subunit">
    <text evidence="4">Monomer. The ACDS complex is made up of alpha, epsilon, beta, gamma and delta chains with a probable stoichiometry of (alpha(2)epsilon(2))(4)-beta(8)-(gamma(1)delta(1))(8) (Potential).</text>
</comment>
<comment type="similarity">
    <text evidence="4">Belongs to the CdhC family.</text>
</comment>
<organism>
    <name type="scientific">Methanocaldococcus jannaschii (strain ATCC 43067 / DSM 2661 / JAL-1 / JCM 10045 / NBRC 100440)</name>
    <name type="common">Methanococcus jannaschii</name>
    <dbReference type="NCBI Taxonomy" id="243232"/>
    <lineage>
        <taxon>Archaea</taxon>
        <taxon>Methanobacteriati</taxon>
        <taxon>Methanobacteriota</taxon>
        <taxon>Methanomada group</taxon>
        <taxon>Methanococci</taxon>
        <taxon>Methanococcales</taxon>
        <taxon>Methanocaldococcaceae</taxon>
        <taxon>Methanocaldococcus</taxon>
    </lineage>
</organism>
<feature type="chain" id="PRO_0000155101" description="Acetyl-CoA decarbonylase/synthase complex subunit beta 1">
    <location>
        <begin position="1"/>
        <end position="748"/>
    </location>
</feature>
<feature type="binding site" evidence="2">
    <location>
        <position position="480"/>
    </location>
    <ligand>
        <name>[Ni-Fe-S] cluster</name>
        <dbReference type="ChEBI" id="CHEBI:60400"/>
    </ligand>
</feature>
<feature type="binding site" evidence="2">
    <location>
        <position position="483"/>
    </location>
    <ligand>
        <name>[Ni-Fe-S] cluster</name>
        <dbReference type="ChEBI" id="CHEBI:60400"/>
    </ligand>
</feature>
<feature type="binding site" evidence="2">
    <location>
        <position position="569"/>
    </location>
    <ligand>
        <name>[Ni-Fe-S] cluster</name>
        <dbReference type="ChEBI" id="CHEBI:60400"/>
    </ligand>
</feature>
<feature type="binding site" evidence="2">
    <location>
        <position position="571"/>
    </location>
    <ligand>
        <name>[Ni-Fe-S] cluster</name>
        <dbReference type="ChEBI" id="CHEBI:60400"/>
    </ligand>
</feature>
<accession>Q57616</accession>
<name>ACDB1_METJA</name>
<proteinExistence type="inferred from homology"/>
<sequence>MKIRLYGETMVVGNIIEGGKTVLNLTKEILEKEDENLKVSYPGTNYNLPIIYGLLGKKIETVKDLKELINSLEIKDEETLENALDAGVVTLICAEAIEALKYAKSEKPYKEPYVGFIPDEILRGLGVPLVEGKIPAILVVIGKVGDKEKLKKLIDDIKKRNILALLVGDIVKEMDEADIEYGLDKLLVPVGNEITSAIHAANLAIRAPLIFGGIEPGKTEEIIDYLKNRVPAVVVALGELDNITLAAGAGCIKAGVPVITNNEVPVIKGALESSDIDNIVENALKMKGVKVKVVEFDIPVSVGPMNEGERVRGPDMYVELAGPKSYGFELVKVVNKAEDKVEIIGKDIDEMEEGSRNPFAIIVEVSGSNLEEDLEGVLERRIHEFLNYIEGVMHLNQRDQVWIRINKNSFNKGLRLKHIGEVVKQLFKEHFPIVEKCNVIIITDPDKVKEELEKAKEIYKKRDEKTKSIREEDVDVFYGCVMCQSFAPTHVCIITPDRPSLCGSINYLDARAAAKIDPNGPIFEIPKGECLDEKLGIYTGVNEVVRERSQGSVEEMALHSALTNPCTSCGCFEAIVFYIPEVDGFGVAHRNFRGETPFGLPFSTLAGQCSGGKQVPGFVGISISYMKSPKFLQGDGGWERVVWLPKELKERVKDAIPEELYDKIATEEDVKTTDELIKFLKEKGHPIVKKTEEEVVEEVEEEKEEVKATEEEKEGIEVGELITKLAKEGGIQIIMKNVKIVINLNVKR</sequence>
<reference key="1">
    <citation type="journal article" date="1996" name="Science">
        <title>Complete genome sequence of the methanogenic archaeon, Methanococcus jannaschii.</title>
        <authorList>
            <person name="Bult C.J."/>
            <person name="White O."/>
            <person name="Olsen G.J."/>
            <person name="Zhou L."/>
            <person name="Fleischmann R.D."/>
            <person name="Sutton G.G."/>
            <person name="Blake J.A."/>
            <person name="FitzGerald L.M."/>
            <person name="Clayton R.A."/>
            <person name="Gocayne J.D."/>
            <person name="Kerlavage A.R."/>
            <person name="Dougherty B.A."/>
            <person name="Tomb J.-F."/>
            <person name="Adams M.D."/>
            <person name="Reich C.I."/>
            <person name="Overbeek R."/>
            <person name="Kirkness E.F."/>
            <person name="Weinstock K.G."/>
            <person name="Merrick J.M."/>
            <person name="Glodek A."/>
            <person name="Scott J.L."/>
            <person name="Geoghagen N.S.M."/>
            <person name="Weidman J.F."/>
            <person name="Fuhrmann J.L."/>
            <person name="Nguyen D."/>
            <person name="Utterback T.R."/>
            <person name="Kelley J.M."/>
            <person name="Peterson J.D."/>
            <person name="Sadow P.W."/>
            <person name="Hanna M.C."/>
            <person name="Cotton M.D."/>
            <person name="Roberts K.M."/>
            <person name="Hurst M.A."/>
            <person name="Kaine B.P."/>
            <person name="Borodovsky M."/>
            <person name="Klenk H.-P."/>
            <person name="Fraser C.M."/>
            <person name="Smith H.O."/>
            <person name="Woese C.R."/>
            <person name="Venter J.C."/>
        </authorList>
    </citation>
    <scope>NUCLEOTIDE SEQUENCE [LARGE SCALE GENOMIC DNA]</scope>
    <source>
        <strain>ATCC 43067 / DSM 2661 / JAL-1 / JCM 10045 / NBRC 100440</strain>
    </source>
</reference>